<organism>
    <name type="scientific">Mus musculus</name>
    <name type="common">Mouse</name>
    <dbReference type="NCBI Taxonomy" id="10090"/>
    <lineage>
        <taxon>Eukaryota</taxon>
        <taxon>Metazoa</taxon>
        <taxon>Chordata</taxon>
        <taxon>Craniata</taxon>
        <taxon>Vertebrata</taxon>
        <taxon>Euteleostomi</taxon>
        <taxon>Mammalia</taxon>
        <taxon>Eutheria</taxon>
        <taxon>Euarchontoglires</taxon>
        <taxon>Glires</taxon>
        <taxon>Rodentia</taxon>
        <taxon>Myomorpha</taxon>
        <taxon>Muroidea</taxon>
        <taxon>Muridae</taxon>
        <taxon>Murinae</taxon>
        <taxon>Mus</taxon>
        <taxon>Mus</taxon>
    </lineage>
</organism>
<gene>
    <name type="primary">Pld5</name>
</gene>
<accession>Q3UNN8</accession>
<accession>Q3UVW3</accession>
<accession>Q497Q7</accession>
<proteinExistence type="evidence at transcript level"/>
<evidence type="ECO:0000255" key="1"/>
<evidence type="ECO:0000255" key="2">
    <source>
        <dbReference type="PROSITE-ProRule" id="PRU00153"/>
    </source>
</evidence>
<evidence type="ECO:0000256" key="3">
    <source>
        <dbReference type="SAM" id="MobiDB-lite"/>
    </source>
</evidence>
<evidence type="ECO:0000303" key="4">
    <source>
    </source>
</evidence>
<evidence type="ECO:0000303" key="5">
    <source>
    </source>
</evidence>
<evidence type="ECO:0000305" key="6"/>
<reference key="1">
    <citation type="journal article" date="2005" name="Science">
        <title>The transcriptional landscape of the mammalian genome.</title>
        <authorList>
            <person name="Carninci P."/>
            <person name="Kasukawa T."/>
            <person name="Katayama S."/>
            <person name="Gough J."/>
            <person name="Frith M.C."/>
            <person name="Maeda N."/>
            <person name="Oyama R."/>
            <person name="Ravasi T."/>
            <person name="Lenhard B."/>
            <person name="Wells C."/>
            <person name="Kodzius R."/>
            <person name="Shimokawa K."/>
            <person name="Bajic V.B."/>
            <person name="Brenner S.E."/>
            <person name="Batalov S."/>
            <person name="Forrest A.R."/>
            <person name="Zavolan M."/>
            <person name="Davis M.J."/>
            <person name="Wilming L.G."/>
            <person name="Aidinis V."/>
            <person name="Allen J.E."/>
            <person name="Ambesi-Impiombato A."/>
            <person name="Apweiler R."/>
            <person name="Aturaliya R.N."/>
            <person name="Bailey T.L."/>
            <person name="Bansal M."/>
            <person name="Baxter L."/>
            <person name="Beisel K.W."/>
            <person name="Bersano T."/>
            <person name="Bono H."/>
            <person name="Chalk A.M."/>
            <person name="Chiu K.P."/>
            <person name="Choudhary V."/>
            <person name="Christoffels A."/>
            <person name="Clutterbuck D.R."/>
            <person name="Crowe M.L."/>
            <person name="Dalla E."/>
            <person name="Dalrymple B.P."/>
            <person name="de Bono B."/>
            <person name="Della Gatta G."/>
            <person name="di Bernardo D."/>
            <person name="Down T."/>
            <person name="Engstrom P."/>
            <person name="Fagiolini M."/>
            <person name="Faulkner G."/>
            <person name="Fletcher C.F."/>
            <person name="Fukushima T."/>
            <person name="Furuno M."/>
            <person name="Futaki S."/>
            <person name="Gariboldi M."/>
            <person name="Georgii-Hemming P."/>
            <person name="Gingeras T.R."/>
            <person name="Gojobori T."/>
            <person name="Green R.E."/>
            <person name="Gustincich S."/>
            <person name="Harbers M."/>
            <person name="Hayashi Y."/>
            <person name="Hensch T.K."/>
            <person name="Hirokawa N."/>
            <person name="Hill D."/>
            <person name="Huminiecki L."/>
            <person name="Iacono M."/>
            <person name="Ikeo K."/>
            <person name="Iwama A."/>
            <person name="Ishikawa T."/>
            <person name="Jakt M."/>
            <person name="Kanapin A."/>
            <person name="Katoh M."/>
            <person name="Kawasawa Y."/>
            <person name="Kelso J."/>
            <person name="Kitamura H."/>
            <person name="Kitano H."/>
            <person name="Kollias G."/>
            <person name="Krishnan S.P."/>
            <person name="Kruger A."/>
            <person name="Kummerfeld S.K."/>
            <person name="Kurochkin I.V."/>
            <person name="Lareau L.F."/>
            <person name="Lazarevic D."/>
            <person name="Lipovich L."/>
            <person name="Liu J."/>
            <person name="Liuni S."/>
            <person name="McWilliam S."/>
            <person name="Madan Babu M."/>
            <person name="Madera M."/>
            <person name="Marchionni L."/>
            <person name="Matsuda H."/>
            <person name="Matsuzawa S."/>
            <person name="Miki H."/>
            <person name="Mignone F."/>
            <person name="Miyake S."/>
            <person name="Morris K."/>
            <person name="Mottagui-Tabar S."/>
            <person name="Mulder N."/>
            <person name="Nakano N."/>
            <person name="Nakauchi H."/>
            <person name="Ng P."/>
            <person name="Nilsson R."/>
            <person name="Nishiguchi S."/>
            <person name="Nishikawa S."/>
            <person name="Nori F."/>
            <person name="Ohara O."/>
            <person name="Okazaki Y."/>
            <person name="Orlando V."/>
            <person name="Pang K.C."/>
            <person name="Pavan W.J."/>
            <person name="Pavesi G."/>
            <person name="Pesole G."/>
            <person name="Petrovsky N."/>
            <person name="Piazza S."/>
            <person name="Reed J."/>
            <person name="Reid J.F."/>
            <person name="Ring B.Z."/>
            <person name="Ringwald M."/>
            <person name="Rost B."/>
            <person name="Ruan Y."/>
            <person name="Salzberg S.L."/>
            <person name="Sandelin A."/>
            <person name="Schneider C."/>
            <person name="Schoenbach C."/>
            <person name="Sekiguchi K."/>
            <person name="Semple C.A."/>
            <person name="Seno S."/>
            <person name="Sessa L."/>
            <person name="Sheng Y."/>
            <person name="Shibata Y."/>
            <person name="Shimada H."/>
            <person name="Shimada K."/>
            <person name="Silva D."/>
            <person name="Sinclair B."/>
            <person name="Sperling S."/>
            <person name="Stupka E."/>
            <person name="Sugiura K."/>
            <person name="Sultana R."/>
            <person name="Takenaka Y."/>
            <person name="Taki K."/>
            <person name="Tammoja K."/>
            <person name="Tan S.L."/>
            <person name="Tang S."/>
            <person name="Taylor M.S."/>
            <person name="Tegner J."/>
            <person name="Teichmann S.A."/>
            <person name="Ueda H.R."/>
            <person name="van Nimwegen E."/>
            <person name="Verardo R."/>
            <person name="Wei C.L."/>
            <person name="Yagi K."/>
            <person name="Yamanishi H."/>
            <person name="Zabarovsky E."/>
            <person name="Zhu S."/>
            <person name="Zimmer A."/>
            <person name="Hide W."/>
            <person name="Bult C."/>
            <person name="Grimmond S.M."/>
            <person name="Teasdale R.D."/>
            <person name="Liu E.T."/>
            <person name="Brusic V."/>
            <person name="Quackenbush J."/>
            <person name="Wahlestedt C."/>
            <person name="Mattick J.S."/>
            <person name="Hume D.A."/>
            <person name="Kai C."/>
            <person name="Sasaki D."/>
            <person name="Tomaru Y."/>
            <person name="Fukuda S."/>
            <person name="Kanamori-Katayama M."/>
            <person name="Suzuki M."/>
            <person name="Aoki J."/>
            <person name="Arakawa T."/>
            <person name="Iida J."/>
            <person name="Imamura K."/>
            <person name="Itoh M."/>
            <person name="Kato T."/>
            <person name="Kawaji H."/>
            <person name="Kawagashira N."/>
            <person name="Kawashima T."/>
            <person name="Kojima M."/>
            <person name="Kondo S."/>
            <person name="Konno H."/>
            <person name="Nakano K."/>
            <person name="Ninomiya N."/>
            <person name="Nishio T."/>
            <person name="Okada M."/>
            <person name="Plessy C."/>
            <person name="Shibata K."/>
            <person name="Shiraki T."/>
            <person name="Suzuki S."/>
            <person name="Tagami M."/>
            <person name="Waki K."/>
            <person name="Watahiki A."/>
            <person name="Okamura-Oho Y."/>
            <person name="Suzuki H."/>
            <person name="Kawai J."/>
            <person name="Hayashizaki Y."/>
        </authorList>
    </citation>
    <scope>NUCLEOTIDE SEQUENCE [LARGE SCALE MRNA] (ISOFORMS 1 AND 3)</scope>
    <source>
        <strain>C57BL/6J</strain>
        <tissue>Diencephalon</tissue>
    </source>
</reference>
<reference key="2">
    <citation type="journal article" date="2004" name="Genome Res.">
        <title>The status, quality, and expansion of the NIH full-length cDNA project: the Mammalian Gene Collection (MGC).</title>
        <authorList>
            <consortium name="The MGC Project Team"/>
        </authorList>
    </citation>
    <scope>NUCLEOTIDE SEQUENCE [LARGE SCALE MRNA] (ISOFORM 2)</scope>
    <source>
        <tissue>Pituitary</tissue>
    </source>
</reference>
<name>PLD5_MOUSE</name>
<keyword id="KW-0025">Alternative splicing</keyword>
<keyword id="KW-0325">Glycoprotein</keyword>
<keyword id="KW-0472">Membrane</keyword>
<keyword id="KW-1185">Reference proteome</keyword>
<keyword id="KW-0677">Repeat</keyword>
<keyword id="KW-0812">Transmembrane</keyword>
<keyword id="KW-1133">Transmembrane helix</keyword>
<feature type="chain" id="PRO_0000288607" description="Inactive phospholipase D5">
    <location>
        <begin position="1"/>
        <end position="536"/>
    </location>
</feature>
<feature type="topological domain" description="Cytoplasmic" evidence="1">
    <location>
        <begin position="1"/>
        <end position="68"/>
    </location>
</feature>
<feature type="transmembrane region" description="Helical" evidence="1">
    <location>
        <begin position="69"/>
        <end position="89"/>
    </location>
</feature>
<feature type="topological domain" description="Extracellular" evidence="1">
    <location>
        <begin position="90"/>
        <end position="536"/>
    </location>
</feature>
<feature type="domain" description="PLD phosphodiesterase 1" evidence="2">
    <location>
        <begin position="215"/>
        <end position="242"/>
    </location>
</feature>
<feature type="domain" description="PLD phosphodiesterase 2" evidence="2">
    <location>
        <begin position="434"/>
        <end position="460"/>
    </location>
</feature>
<feature type="region of interest" description="Disordered" evidence="3">
    <location>
        <begin position="503"/>
        <end position="536"/>
    </location>
</feature>
<feature type="compositionally biased region" description="Low complexity" evidence="3">
    <location>
        <begin position="511"/>
        <end position="521"/>
    </location>
</feature>
<feature type="glycosylation site" description="N-linked (GlcNAc...) asparagine" evidence="1">
    <location>
        <position position="121"/>
    </location>
</feature>
<feature type="glycosylation site" description="N-linked (GlcNAc...) asparagine" evidence="1">
    <location>
        <position position="302"/>
    </location>
</feature>
<feature type="splice variant" id="VSP_025728" description="In isoform 3." evidence="5">
    <location>
        <begin position="1"/>
        <end position="208"/>
    </location>
</feature>
<feature type="splice variant" id="VSP_025729" description="In isoform 2." evidence="4">
    <location>
        <begin position="1"/>
        <end position="91"/>
    </location>
</feature>
<protein>
    <recommendedName>
        <fullName>Inactive phospholipase D5</fullName>
        <shortName>Inactive PLD 5</shortName>
    </recommendedName>
    <alternativeName>
        <fullName>Inactive choline phosphatase 5</fullName>
    </alternativeName>
    <alternativeName>
        <fullName>Inactive phosphatidylcholine-hydrolyzing phospholipase D5</fullName>
    </alternativeName>
</protein>
<sequence>MEIRQHEWLSASPHEGFEQMRLKSRPKEPSPSLTRVGANFYSSVKQQDYSASVWLRRKDKLEHSQQKCIVIFALVCCFAVLVALIFSAVDIMGEDEDGLSEKNCQNKCRIALVENIPEGLNYSEDAPFHLPLFQGWMNLLNMAKKSVDIVSSHWDLNHTHPAACQGQRLFEKLLQLTSQNIEVKLVSDVTADSKVLEALKLKGAEVTYMNMTAYNKGRLQSSFWIVDKQHVYIGSAGLDWRSLGQMKELGVIFYNCSCLVLDLQRIFALYSSLKFKSRVPQTWSKRLYGVYDNEKKLQLQLNETKSQAFVSNSPKLFCPKNRSFDIDAIYSVIDDAKQYVYIAVTDYLPISSTSSKRTYWPDLDGKIREALVLRSVKVRLLISFWKETDPLTFNFISSLKAICTEIANCSLKVKFFDLERENACATKEQKNQTFPKLNRNKYMVTDGAAYIGNFDWVGNDFTQNAGTGLVINQADVRDNRSIIKQLKDVFERDWYSPYAKSIQPTKQPNCSSLSKLKSPSKQPAMANATGREPLSV</sequence>
<comment type="subcellular location">
    <subcellularLocation>
        <location evidence="6">Membrane</location>
        <topology evidence="6">Single-pass membrane protein</topology>
    </subcellularLocation>
</comment>
<comment type="alternative products">
    <event type="alternative splicing"/>
    <isoform>
        <id>Q3UNN8-1</id>
        <name>1</name>
        <sequence type="displayed"/>
    </isoform>
    <isoform>
        <id>Q3UNN8-2</id>
        <name>2</name>
        <sequence type="described" ref="VSP_025729"/>
    </isoform>
    <isoform>
        <id>Q3UNN8-3</id>
        <name>3</name>
        <sequence type="described" ref="VSP_025728"/>
    </isoform>
</comment>
<comment type="similarity">
    <text evidence="6">Belongs to the phospholipase D family.</text>
</comment>
<comment type="caution">
    <text evidence="6">In contrast to other members of the family, it lacks the conserved active sites, suggesting that it has no phospholipase activity.</text>
</comment>
<comment type="sequence caution" evidence="6">
    <conflict type="erroneous termination">
        <sequence resource="EMBL-CDS" id="AAI00429"/>
    </conflict>
    <text>Truncated C-terminus.</text>
</comment>
<dbReference type="EMBL" id="AK136851">
    <property type="protein sequence ID" value="BAE23146.1"/>
    <property type="molecule type" value="mRNA"/>
</dbReference>
<dbReference type="EMBL" id="AK136888">
    <property type="protein sequence ID" value="BAE23156.1"/>
    <property type="molecule type" value="mRNA"/>
</dbReference>
<dbReference type="EMBL" id="AK144116">
    <property type="protein sequence ID" value="BAE25709.1"/>
    <property type="molecule type" value="mRNA"/>
</dbReference>
<dbReference type="EMBL" id="BC100428">
    <property type="protein sequence ID" value="AAI00429.1"/>
    <property type="status" value="ALT_SEQ"/>
    <property type="molecule type" value="mRNA"/>
</dbReference>
<dbReference type="CCDS" id="CCDS15552.1">
    <molecule id="Q3UNN8-1"/>
</dbReference>
<dbReference type="RefSeq" id="NP_001182745.1">
    <property type="nucleotide sequence ID" value="NM_001195816.1"/>
</dbReference>
<dbReference type="RefSeq" id="NP_001344775.1">
    <molecule id="Q3UNN8-3"/>
    <property type="nucleotide sequence ID" value="NM_001357846.1"/>
</dbReference>
<dbReference type="RefSeq" id="NP_001344776.1">
    <molecule id="Q3UNN8-3"/>
    <property type="nucleotide sequence ID" value="NM_001357847.1"/>
</dbReference>
<dbReference type="RefSeq" id="NP_795890.2">
    <molecule id="Q3UNN8-1"/>
    <property type="nucleotide sequence ID" value="NM_176916.4"/>
</dbReference>
<dbReference type="RefSeq" id="XP_006496963.1">
    <molecule id="Q3UNN8-3"/>
    <property type="nucleotide sequence ID" value="XM_006496900.5"/>
</dbReference>
<dbReference type="RefSeq" id="XP_011237130.1">
    <property type="nucleotide sequence ID" value="XM_011238828.1"/>
</dbReference>
<dbReference type="RefSeq" id="XP_011237131.1">
    <property type="nucleotide sequence ID" value="XM_011238829.2"/>
</dbReference>
<dbReference type="RefSeq" id="XP_017176664.1">
    <property type="nucleotide sequence ID" value="XM_017321175.1"/>
</dbReference>
<dbReference type="RefSeq" id="XP_030110756.1">
    <molecule id="Q3UNN8-2"/>
    <property type="nucleotide sequence ID" value="XM_030254896.2"/>
</dbReference>
<dbReference type="RefSeq" id="XP_030110769.1">
    <molecule id="Q3UNN8-3"/>
    <property type="nucleotide sequence ID" value="XM_030254909.1"/>
</dbReference>
<dbReference type="RefSeq" id="XP_036021576.1">
    <molecule id="Q3UNN8-3"/>
    <property type="nucleotide sequence ID" value="XM_036165683.1"/>
</dbReference>
<dbReference type="SMR" id="Q3UNN8"/>
<dbReference type="STRING" id="10090.ENSMUSP00000069326"/>
<dbReference type="GlyConnect" id="2387">
    <property type="glycosylation" value="1 N-Linked glycan (1 site)"/>
</dbReference>
<dbReference type="GlyCosmos" id="Q3UNN8">
    <property type="glycosylation" value="3 sites, 1 glycan"/>
</dbReference>
<dbReference type="GlyGen" id="Q3UNN8">
    <property type="glycosylation" value="7 sites, 6 N-linked glycans (6 sites)"/>
</dbReference>
<dbReference type="iPTMnet" id="Q3UNN8"/>
<dbReference type="PhosphoSitePlus" id="Q3UNN8"/>
<dbReference type="PaxDb" id="10090-ENSMUSP00000069326"/>
<dbReference type="ProteomicsDB" id="289678">
    <molecule id="Q3UNN8-1"/>
</dbReference>
<dbReference type="ProteomicsDB" id="289679">
    <molecule id="Q3UNN8-2"/>
</dbReference>
<dbReference type="ProteomicsDB" id="289680">
    <molecule id="Q3UNN8-3"/>
</dbReference>
<dbReference type="Antibodypedia" id="34707">
    <property type="antibodies" value="122 antibodies from 20 providers"/>
</dbReference>
<dbReference type="Ensembl" id="ENSMUST00000065967.14">
    <molecule id="Q3UNN8-1"/>
    <property type="protein sequence ID" value="ENSMUSP00000069326.8"/>
    <property type="gene ID" value="ENSMUSG00000055214.16"/>
</dbReference>
<dbReference type="GeneID" id="319455"/>
<dbReference type="KEGG" id="mmu:319455"/>
<dbReference type="UCSC" id="uc007dtw.1">
    <molecule id="Q3UNN8-1"/>
    <property type="organism name" value="mouse"/>
</dbReference>
<dbReference type="AGR" id="MGI:2442056"/>
<dbReference type="CTD" id="200150"/>
<dbReference type="MGI" id="MGI:2442056">
    <property type="gene designation" value="Pld5"/>
</dbReference>
<dbReference type="VEuPathDB" id="HostDB:ENSMUSG00000055214"/>
<dbReference type="eggNOG" id="KOG3603">
    <property type="taxonomic scope" value="Eukaryota"/>
</dbReference>
<dbReference type="GeneTree" id="ENSGT00950000183059"/>
<dbReference type="InParanoid" id="Q3UNN8"/>
<dbReference type="OMA" id="ETRYWPY"/>
<dbReference type="OrthoDB" id="1923775at2759"/>
<dbReference type="PhylomeDB" id="Q3UNN8"/>
<dbReference type="TreeFam" id="TF313378"/>
<dbReference type="BioGRID-ORCS" id="319455">
    <property type="hits" value="1 hit in 78 CRISPR screens"/>
</dbReference>
<dbReference type="ChiTaRS" id="Pld5">
    <property type="organism name" value="mouse"/>
</dbReference>
<dbReference type="PRO" id="PR:Q3UNN8"/>
<dbReference type="Proteomes" id="UP000000589">
    <property type="component" value="Chromosome 1"/>
</dbReference>
<dbReference type="RNAct" id="Q3UNN8">
    <property type="molecule type" value="protein"/>
</dbReference>
<dbReference type="Bgee" id="ENSMUSG00000055214">
    <property type="expression patterns" value="Expressed in cerebellar cortex and 32 other cell types or tissues"/>
</dbReference>
<dbReference type="ExpressionAtlas" id="Q3UNN8">
    <property type="expression patterns" value="baseline and differential"/>
</dbReference>
<dbReference type="GO" id="GO:0005789">
    <property type="term" value="C:endoplasmic reticulum membrane"/>
    <property type="evidence" value="ECO:0007669"/>
    <property type="project" value="UniProtKB-ARBA"/>
</dbReference>
<dbReference type="GO" id="GO:0016788">
    <property type="term" value="F:hydrolase activity, acting on ester bonds"/>
    <property type="evidence" value="ECO:0007669"/>
    <property type="project" value="UniProtKB-ARBA"/>
</dbReference>
<dbReference type="CDD" id="cd09146">
    <property type="entry name" value="PLDc_vPLD5_1"/>
    <property type="match status" value="1"/>
</dbReference>
<dbReference type="CDD" id="cd09149">
    <property type="entry name" value="PLDc_vPLD5_2"/>
    <property type="match status" value="1"/>
</dbReference>
<dbReference type="Gene3D" id="3.30.870.10">
    <property type="entry name" value="Endonuclease Chain A"/>
    <property type="match status" value="2"/>
</dbReference>
<dbReference type="InterPro" id="IPR050874">
    <property type="entry name" value="Diverse_PLD-related"/>
</dbReference>
<dbReference type="InterPro" id="IPR032803">
    <property type="entry name" value="PLDc_3"/>
</dbReference>
<dbReference type="InterPro" id="IPR001736">
    <property type="entry name" value="PLipase_D/transphosphatidylase"/>
</dbReference>
<dbReference type="PANTHER" id="PTHR10185:SF9">
    <property type="entry name" value="INACTIVE PHOSPHOLIPASE D5"/>
    <property type="match status" value="1"/>
</dbReference>
<dbReference type="PANTHER" id="PTHR10185">
    <property type="entry name" value="PHOSPHOLIPASE D - RELATED"/>
    <property type="match status" value="1"/>
</dbReference>
<dbReference type="Pfam" id="PF13918">
    <property type="entry name" value="PLDc_3"/>
    <property type="match status" value="1"/>
</dbReference>
<dbReference type="SMART" id="SM00155">
    <property type="entry name" value="PLDc"/>
    <property type="match status" value="2"/>
</dbReference>
<dbReference type="SUPFAM" id="SSF56024">
    <property type="entry name" value="Phospholipase D/nuclease"/>
    <property type="match status" value="2"/>
</dbReference>
<dbReference type="PROSITE" id="PS50035">
    <property type="entry name" value="PLD"/>
    <property type="match status" value="1"/>
</dbReference>